<evidence type="ECO:0000255" key="1">
    <source>
        <dbReference type="PROSITE-ProRule" id="PRU00448"/>
    </source>
</evidence>
<dbReference type="EMBL" id="AL390298">
    <property type="status" value="NOT_ANNOTATED_CDS"/>
    <property type="molecule type" value="Genomic_DNA"/>
</dbReference>
<dbReference type="SMR" id="A8MWE9"/>
<dbReference type="STRING" id="9606.ENSP00000383366"/>
<dbReference type="GlyGen" id="A8MWE9">
    <property type="glycosylation" value="1 site"/>
</dbReference>
<dbReference type="PhosphoSitePlus" id="A8MWE9"/>
<dbReference type="BioMuta" id="EFCAB8"/>
<dbReference type="PaxDb" id="9606-ENSP00000383366"/>
<dbReference type="PeptideAtlas" id="A8MWE9"/>
<dbReference type="Antibodypedia" id="59265">
    <property type="antibodies" value="5 antibodies from 5 providers"/>
</dbReference>
<dbReference type="Ensembl" id="ENST00000618684.1">
    <property type="protein sequence ID" value="ENSP00000481567.1"/>
    <property type="gene ID" value="ENSG00000215529.13"/>
</dbReference>
<dbReference type="UCSC" id="uc061wfk.1">
    <property type="organism name" value="human"/>
</dbReference>
<dbReference type="AGR" id="HGNC:34532"/>
<dbReference type="GeneCards" id="EFCAB8"/>
<dbReference type="HGNC" id="HGNC:34532">
    <property type="gene designation" value="EFCAB8"/>
</dbReference>
<dbReference type="HPA" id="ENSG00000215529">
    <property type="expression patterns" value="Tissue enriched (testis)"/>
</dbReference>
<dbReference type="neXtProt" id="NX_A8MWE9"/>
<dbReference type="OpenTargets" id="ENSG00000215529"/>
<dbReference type="VEuPathDB" id="HostDB:ENSG00000215529"/>
<dbReference type="eggNOG" id="KOG0274">
    <property type="taxonomic scope" value="Eukaryota"/>
</dbReference>
<dbReference type="GeneTree" id="ENSGT00940000163617"/>
<dbReference type="HOGENOM" id="CLU_120283_0_0_1"/>
<dbReference type="InParanoid" id="A8MWE9"/>
<dbReference type="OMA" id="MQPGKIH"/>
<dbReference type="OrthoDB" id="5980302at2759"/>
<dbReference type="PAN-GO" id="A8MWE9">
    <property type="GO annotations" value="0 GO annotations based on evolutionary models"/>
</dbReference>
<dbReference type="PhylomeDB" id="A8MWE9"/>
<dbReference type="TreeFam" id="TF353054"/>
<dbReference type="SignaLink" id="A8MWE9"/>
<dbReference type="ChiTaRS" id="EFCAB8">
    <property type="organism name" value="human"/>
</dbReference>
<dbReference type="Pharos" id="A8MWE9">
    <property type="development level" value="Tdark"/>
</dbReference>
<dbReference type="PRO" id="PR:A8MWE9"/>
<dbReference type="Proteomes" id="UP000005640">
    <property type="component" value="Chromosome 20"/>
</dbReference>
<dbReference type="RNAct" id="A8MWE9">
    <property type="molecule type" value="protein"/>
</dbReference>
<dbReference type="Bgee" id="ENSG00000215529">
    <property type="expression patterns" value="Expressed in primordial germ cell in gonad and 73 other cell types or tissues"/>
</dbReference>
<dbReference type="ExpressionAtlas" id="A8MWE9">
    <property type="expression patterns" value="baseline and differential"/>
</dbReference>
<dbReference type="GO" id="GO:0005509">
    <property type="term" value="F:calcium ion binding"/>
    <property type="evidence" value="ECO:0007669"/>
    <property type="project" value="InterPro"/>
</dbReference>
<dbReference type="Gene3D" id="1.10.238.10">
    <property type="entry name" value="EF-hand"/>
    <property type="match status" value="1"/>
</dbReference>
<dbReference type="InterPro" id="IPR011992">
    <property type="entry name" value="EF-hand-dom_pair"/>
</dbReference>
<dbReference type="InterPro" id="IPR002048">
    <property type="entry name" value="EF_hand_dom"/>
</dbReference>
<dbReference type="InterPro" id="IPR051242">
    <property type="entry name" value="WD-EF-hand_domain"/>
</dbReference>
<dbReference type="PANTHER" id="PTHR44324:SF6">
    <property type="entry name" value="EF-HAND CALCIUM BINDING DOMAIN 8"/>
    <property type="match status" value="1"/>
</dbReference>
<dbReference type="PANTHER" id="PTHR44324">
    <property type="entry name" value="WD40 REPEAT DOMAIN 95"/>
    <property type="match status" value="1"/>
</dbReference>
<dbReference type="SUPFAM" id="SSF47473">
    <property type="entry name" value="EF-hand"/>
    <property type="match status" value="1"/>
</dbReference>
<dbReference type="PROSITE" id="PS50222">
    <property type="entry name" value="EF_HAND_2"/>
    <property type="match status" value="2"/>
</dbReference>
<sequence>MSSEDLAEIPQLQKLSIPHGFQNKEAASSPTPSITLSQVPDLQPGSQLFTEIHLAKIEKMFEEDINSTGALGMDAFIKAMKKVLSSVSDEMLKELFLKVDSDCEGFVTWQKYVDYMMREFQGKEDMRKSQYRLHFYLPMTVVPL</sequence>
<accession>A8MWE9</accession>
<reference key="1">
    <citation type="journal article" date="2001" name="Nature">
        <title>The DNA sequence and comparative analysis of human chromosome 20.</title>
        <authorList>
            <person name="Deloukas P."/>
            <person name="Matthews L.H."/>
            <person name="Ashurst J.L."/>
            <person name="Burton J."/>
            <person name="Gilbert J.G.R."/>
            <person name="Jones M."/>
            <person name="Stavrides G."/>
            <person name="Almeida J.P."/>
            <person name="Babbage A.K."/>
            <person name="Bagguley C.L."/>
            <person name="Bailey J."/>
            <person name="Barlow K.F."/>
            <person name="Bates K.N."/>
            <person name="Beard L.M."/>
            <person name="Beare D.M."/>
            <person name="Beasley O.P."/>
            <person name="Bird C.P."/>
            <person name="Blakey S.E."/>
            <person name="Bridgeman A.M."/>
            <person name="Brown A.J."/>
            <person name="Buck D."/>
            <person name="Burrill W.D."/>
            <person name="Butler A.P."/>
            <person name="Carder C."/>
            <person name="Carter N.P."/>
            <person name="Chapman J.C."/>
            <person name="Clamp M."/>
            <person name="Clark G."/>
            <person name="Clark L.N."/>
            <person name="Clark S.Y."/>
            <person name="Clee C.M."/>
            <person name="Clegg S."/>
            <person name="Cobley V.E."/>
            <person name="Collier R.E."/>
            <person name="Connor R.E."/>
            <person name="Corby N.R."/>
            <person name="Coulson A."/>
            <person name="Coville G.J."/>
            <person name="Deadman R."/>
            <person name="Dhami P.D."/>
            <person name="Dunn M."/>
            <person name="Ellington A.G."/>
            <person name="Frankland J.A."/>
            <person name="Fraser A."/>
            <person name="French L."/>
            <person name="Garner P."/>
            <person name="Grafham D.V."/>
            <person name="Griffiths C."/>
            <person name="Griffiths M.N.D."/>
            <person name="Gwilliam R."/>
            <person name="Hall R.E."/>
            <person name="Hammond S."/>
            <person name="Harley J.L."/>
            <person name="Heath P.D."/>
            <person name="Ho S."/>
            <person name="Holden J.L."/>
            <person name="Howden P.J."/>
            <person name="Huckle E."/>
            <person name="Hunt A.R."/>
            <person name="Hunt S.E."/>
            <person name="Jekosch K."/>
            <person name="Johnson C.M."/>
            <person name="Johnson D."/>
            <person name="Kay M.P."/>
            <person name="Kimberley A.M."/>
            <person name="King A."/>
            <person name="Knights A."/>
            <person name="Laird G.K."/>
            <person name="Lawlor S."/>
            <person name="Lehvaeslaiho M.H."/>
            <person name="Leversha M.A."/>
            <person name="Lloyd C."/>
            <person name="Lloyd D.M."/>
            <person name="Lovell J.D."/>
            <person name="Marsh V.L."/>
            <person name="Martin S.L."/>
            <person name="McConnachie L.J."/>
            <person name="McLay K."/>
            <person name="McMurray A.A."/>
            <person name="Milne S.A."/>
            <person name="Mistry D."/>
            <person name="Moore M.J.F."/>
            <person name="Mullikin J.C."/>
            <person name="Nickerson T."/>
            <person name="Oliver K."/>
            <person name="Parker A."/>
            <person name="Patel R."/>
            <person name="Pearce T.A.V."/>
            <person name="Peck A.I."/>
            <person name="Phillimore B.J.C.T."/>
            <person name="Prathalingam S.R."/>
            <person name="Plumb R.W."/>
            <person name="Ramsay H."/>
            <person name="Rice C.M."/>
            <person name="Ross M.T."/>
            <person name="Scott C.E."/>
            <person name="Sehra H.K."/>
            <person name="Shownkeen R."/>
            <person name="Sims S."/>
            <person name="Skuce C.D."/>
            <person name="Smith M.L."/>
            <person name="Soderlund C."/>
            <person name="Steward C.A."/>
            <person name="Sulston J.E."/>
            <person name="Swann R.M."/>
            <person name="Sycamore N."/>
            <person name="Taylor R."/>
            <person name="Tee L."/>
            <person name="Thomas D.W."/>
            <person name="Thorpe A."/>
            <person name="Tracey A."/>
            <person name="Tromans A.C."/>
            <person name="Vaudin M."/>
            <person name="Wall M."/>
            <person name="Wallis J.M."/>
            <person name="Whitehead S.L."/>
            <person name="Whittaker P."/>
            <person name="Willey D.L."/>
            <person name="Williams L."/>
            <person name="Williams S.A."/>
            <person name="Wilming L."/>
            <person name="Wray P.W."/>
            <person name="Hubbard T."/>
            <person name="Durbin R.M."/>
            <person name="Bentley D.R."/>
            <person name="Beck S."/>
            <person name="Rogers J."/>
        </authorList>
    </citation>
    <scope>NUCLEOTIDE SEQUENCE [LARGE SCALE GENOMIC DNA]</scope>
</reference>
<name>EFCB8_HUMAN</name>
<organism>
    <name type="scientific">Homo sapiens</name>
    <name type="common">Human</name>
    <dbReference type="NCBI Taxonomy" id="9606"/>
    <lineage>
        <taxon>Eukaryota</taxon>
        <taxon>Metazoa</taxon>
        <taxon>Chordata</taxon>
        <taxon>Craniata</taxon>
        <taxon>Vertebrata</taxon>
        <taxon>Euteleostomi</taxon>
        <taxon>Mammalia</taxon>
        <taxon>Eutheria</taxon>
        <taxon>Euarchontoglires</taxon>
        <taxon>Primates</taxon>
        <taxon>Haplorrhini</taxon>
        <taxon>Catarrhini</taxon>
        <taxon>Hominidae</taxon>
        <taxon>Homo</taxon>
    </lineage>
</organism>
<feature type="chain" id="PRO_0000340678" description="EF-hand calcium-binding domain-containing protein 8">
    <location>
        <begin position="1"/>
        <end position="144"/>
    </location>
</feature>
<feature type="domain" description="EF-hand 1" evidence="1">
    <location>
        <begin position="52"/>
        <end position="86"/>
    </location>
</feature>
<feature type="domain" description="EF-hand 2" evidence="1">
    <location>
        <begin position="87"/>
        <end position="122"/>
    </location>
</feature>
<gene>
    <name type="primary">EFCAB8</name>
</gene>
<proteinExistence type="predicted"/>
<keyword id="KW-1185">Reference proteome</keyword>
<keyword id="KW-0677">Repeat</keyword>
<protein>
    <recommendedName>
        <fullName>EF-hand calcium-binding domain-containing protein 8</fullName>
    </recommendedName>
</protein>